<reference key="1">
    <citation type="journal article" date="2000" name="Nature">
        <title>Sequence and analysis of chromosome 3 of the plant Arabidopsis thaliana.</title>
        <authorList>
            <person name="Salanoubat M."/>
            <person name="Lemcke K."/>
            <person name="Rieger M."/>
            <person name="Ansorge W."/>
            <person name="Unseld M."/>
            <person name="Fartmann B."/>
            <person name="Valle G."/>
            <person name="Bloecker H."/>
            <person name="Perez-Alonso M."/>
            <person name="Obermaier B."/>
            <person name="Delseny M."/>
            <person name="Boutry M."/>
            <person name="Grivell L.A."/>
            <person name="Mache R."/>
            <person name="Puigdomenech P."/>
            <person name="De Simone V."/>
            <person name="Choisne N."/>
            <person name="Artiguenave F."/>
            <person name="Robert C."/>
            <person name="Brottier P."/>
            <person name="Wincker P."/>
            <person name="Cattolico L."/>
            <person name="Weissenbach J."/>
            <person name="Saurin W."/>
            <person name="Quetier F."/>
            <person name="Schaefer M."/>
            <person name="Mueller-Auer S."/>
            <person name="Gabel C."/>
            <person name="Fuchs M."/>
            <person name="Benes V."/>
            <person name="Wurmbach E."/>
            <person name="Drzonek H."/>
            <person name="Erfle H."/>
            <person name="Jordan N."/>
            <person name="Bangert S."/>
            <person name="Wiedelmann R."/>
            <person name="Kranz H."/>
            <person name="Voss H."/>
            <person name="Holland R."/>
            <person name="Brandt P."/>
            <person name="Nyakatura G."/>
            <person name="Vezzi A."/>
            <person name="D'Angelo M."/>
            <person name="Pallavicini A."/>
            <person name="Toppo S."/>
            <person name="Simionati B."/>
            <person name="Conrad A."/>
            <person name="Hornischer K."/>
            <person name="Kauer G."/>
            <person name="Loehnert T.-H."/>
            <person name="Nordsiek G."/>
            <person name="Reichelt J."/>
            <person name="Scharfe M."/>
            <person name="Schoen O."/>
            <person name="Bargues M."/>
            <person name="Terol J."/>
            <person name="Climent J."/>
            <person name="Navarro P."/>
            <person name="Collado C."/>
            <person name="Perez-Perez A."/>
            <person name="Ottenwaelder B."/>
            <person name="Duchemin D."/>
            <person name="Cooke R."/>
            <person name="Laudie M."/>
            <person name="Berger-Llauro C."/>
            <person name="Purnelle B."/>
            <person name="Masuy D."/>
            <person name="de Haan M."/>
            <person name="Maarse A.C."/>
            <person name="Alcaraz J.-P."/>
            <person name="Cottet A."/>
            <person name="Casacuberta E."/>
            <person name="Monfort A."/>
            <person name="Argiriou A."/>
            <person name="Flores M."/>
            <person name="Liguori R."/>
            <person name="Vitale D."/>
            <person name="Mannhaupt G."/>
            <person name="Haase D."/>
            <person name="Schoof H."/>
            <person name="Rudd S."/>
            <person name="Zaccaria P."/>
            <person name="Mewes H.-W."/>
            <person name="Mayer K.F.X."/>
            <person name="Kaul S."/>
            <person name="Town C.D."/>
            <person name="Koo H.L."/>
            <person name="Tallon L.J."/>
            <person name="Jenkins J."/>
            <person name="Rooney T."/>
            <person name="Rizzo M."/>
            <person name="Walts A."/>
            <person name="Utterback T."/>
            <person name="Fujii C.Y."/>
            <person name="Shea T.P."/>
            <person name="Creasy T.H."/>
            <person name="Haas B."/>
            <person name="Maiti R."/>
            <person name="Wu D."/>
            <person name="Peterson J."/>
            <person name="Van Aken S."/>
            <person name="Pai G."/>
            <person name="Militscher J."/>
            <person name="Sellers P."/>
            <person name="Gill J.E."/>
            <person name="Feldblyum T.V."/>
            <person name="Preuss D."/>
            <person name="Lin X."/>
            <person name="Nierman W.C."/>
            <person name="Salzberg S.L."/>
            <person name="White O."/>
            <person name="Venter J.C."/>
            <person name="Fraser C.M."/>
            <person name="Kaneko T."/>
            <person name="Nakamura Y."/>
            <person name="Sato S."/>
            <person name="Kato T."/>
            <person name="Asamizu E."/>
            <person name="Sasamoto S."/>
            <person name="Kimura T."/>
            <person name="Idesawa K."/>
            <person name="Kawashima K."/>
            <person name="Kishida Y."/>
            <person name="Kiyokawa C."/>
            <person name="Kohara M."/>
            <person name="Matsumoto M."/>
            <person name="Matsuno A."/>
            <person name="Muraki A."/>
            <person name="Nakayama S."/>
            <person name="Nakazaki N."/>
            <person name="Shinpo S."/>
            <person name="Takeuchi C."/>
            <person name="Wada T."/>
            <person name="Watanabe A."/>
            <person name="Yamada M."/>
            <person name="Yasuda M."/>
            <person name="Tabata S."/>
        </authorList>
    </citation>
    <scope>NUCLEOTIDE SEQUENCE [LARGE SCALE GENOMIC DNA]</scope>
    <source>
        <strain>cv. Columbia</strain>
    </source>
</reference>
<reference key="2">
    <citation type="journal article" date="2017" name="Plant J.">
        <title>Araport11: a complete reannotation of the Arabidopsis thaliana reference genome.</title>
        <authorList>
            <person name="Cheng C.Y."/>
            <person name="Krishnakumar V."/>
            <person name="Chan A.P."/>
            <person name="Thibaud-Nissen F."/>
            <person name="Schobel S."/>
            <person name="Town C.D."/>
        </authorList>
    </citation>
    <scope>GENOME REANNOTATION</scope>
    <source>
        <strain>cv. Columbia</strain>
    </source>
</reference>
<reference key="3">
    <citation type="journal article" date="2003" name="DNA Res.">
        <title>Comprehensive analysis of NAC family genes in Oryza sativa and Arabidopsis thaliana.</title>
        <authorList>
            <person name="Ooka H."/>
            <person name="Satoh K."/>
            <person name="Doi K."/>
            <person name="Nagata T."/>
            <person name="Otomo Y."/>
            <person name="Murakami K."/>
            <person name="Matsubara K."/>
            <person name="Osato N."/>
            <person name="Kawai J."/>
            <person name="Carninci P."/>
            <person name="Hayashizaki Y."/>
            <person name="Suzuki K."/>
            <person name="Kojima K."/>
            <person name="Takahara Y."/>
            <person name="Yamamoto K."/>
            <person name="Kikuchi S."/>
        </authorList>
    </citation>
    <scope>GENE FAMILY</scope>
    <scope>NOMENCLATURE</scope>
</reference>
<reference key="4">
    <citation type="journal article" date="2006" name="Plant J.">
        <title>Type III effectors orchestrate a complex interplay between transcriptional networks to modify basal defence responses during pathogenesis and resistance.</title>
        <authorList>
            <person name="Truman W."/>
            <person name="de Zabala M.T."/>
            <person name="Grant M."/>
        </authorList>
    </citation>
    <scope>INDUCTION BY PSEUDOMONAS SYRINGAE</scope>
</reference>
<reference key="5">
    <citation type="journal article" date="2009" name="Genetics">
        <title>A collection of Ds insertional mutants associated with defects in male gametophyte development and function in Arabidopsis thaliana.</title>
        <authorList>
            <person name="Boavida L.C."/>
            <person name="Shuai B."/>
            <person name="Yu H.J."/>
            <person name="Pagnussat G.C."/>
            <person name="Sundaresan V."/>
            <person name="McCormick S."/>
        </authorList>
    </citation>
    <scope>FUNCTION</scope>
    <scope>DISRUPTION PHENOTYPE</scope>
    <source>
        <strain>cv. Landsberg erecta</strain>
    </source>
</reference>
<reference key="6">
    <citation type="journal article" date="2013" name="Plant Cell">
        <title>The membrane-bound NAC transcription factor ANAC013 functions in mitochondrial retrograde regulation of the oxidative stress response in Arabidopsis.</title>
        <authorList>
            <person name="De Clercq I."/>
            <person name="Vermeirssen V."/>
            <person name="Van Aken O."/>
            <person name="Vandepoele K."/>
            <person name="Murcha M.W."/>
            <person name="Law S.R."/>
            <person name="Inze A."/>
            <person name="Ng S."/>
            <person name="Ivanova A."/>
            <person name="Rombaut D."/>
            <person name="van de Cotte B."/>
            <person name="Jaspers P."/>
            <person name="Van de Peer Y."/>
            <person name="Kangasjaervi J."/>
            <person name="Whelan J."/>
            <person name="Van Breusegem F."/>
        </authorList>
    </citation>
    <scope>FUNCTION</scope>
    <scope>GENE FAMILY</scope>
</reference>
<reference key="7">
    <citation type="journal article" date="2015" name="Cell Discov.">
        <title>C-terminal domains of a histone demethylase interact with a pair of transcription factors and mediate specific chromatin association.</title>
        <authorList>
            <person name="Zhang S."/>
            <person name="Zhou B."/>
            <person name="Kang Y."/>
            <person name="Cui X."/>
            <person name="Liu A."/>
            <person name="Deleris A."/>
            <person name="Greenberg M.V.C."/>
            <person name="Cui X."/>
            <person name="Qiu Q."/>
            <person name="Lu F."/>
            <person name="Wohlschlegel J.A."/>
            <person name="Jacobsen S.E."/>
            <person name="Cao X."/>
        </authorList>
    </citation>
    <scope>FUNCTION</scope>
    <scope>DISRUPTION PHENOTYPE</scope>
    <scope>INTERACTION WITH JMJ14</scope>
    <scope>SUBCELLULAR LOCATION</scope>
    <source>
        <strain>cv. Columbia</strain>
    </source>
</reference>
<reference key="8">
    <citation type="journal article" date="2015" name="Nucleic Acids Res.">
        <title>Two novel NAC transcription factors regulate gene expression and flowering time by associating with the histone demethylase JMJ14.</title>
        <authorList>
            <person name="Ning Y.-Q."/>
            <person name="Ma Z.-Y."/>
            <person name="Huang H.-W."/>
            <person name="Mo H."/>
            <person name="Zhao T.-T."/>
            <person name="Li L."/>
            <person name="Cai T."/>
            <person name="Chen S."/>
            <person name="Ma L."/>
            <person name="He X.-J."/>
        </authorList>
    </citation>
    <scope>FUNCTION</scope>
    <scope>DISRUPTION PHENOTYPE</scope>
    <scope>INTERACTION WITH JMJ14 AND NAC050</scope>
    <scope>TISSUE SPECIFICITY</scope>
    <scope>IDENTIFICATION BY MASS SPECTROMETRY</scope>
    <source>
        <strain>cv. Columbia</strain>
    </source>
</reference>
<reference key="9">
    <citation type="journal article" date="2017" name="Plant J.">
        <title>sgs1: a neomorphic nac52 allele impairing post-transcriptional gene silencing through SGS3 downregulation.</title>
        <authorList>
            <person name="Butel N."/>
            <person name="Le Masson I."/>
            <person name="Bouteiller N."/>
            <person name="Vaucheret H."/>
            <person name="Elmayan T."/>
        </authorList>
    </citation>
    <scope>FUNCTION</scope>
    <scope>MUTAGENESIS OF ARG-32</scope>
</reference>
<organism>
    <name type="scientific">Arabidopsis thaliana</name>
    <name type="common">Mouse-ear cress</name>
    <dbReference type="NCBI Taxonomy" id="3702"/>
    <lineage>
        <taxon>Eukaryota</taxon>
        <taxon>Viridiplantae</taxon>
        <taxon>Streptophyta</taxon>
        <taxon>Embryophyta</taxon>
        <taxon>Tracheophyta</taxon>
        <taxon>Spermatophyta</taxon>
        <taxon>Magnoliopsida</taxon>
        <taxon>eudicotyledons</taxon>
        <taxon>Gunneridae</taxon>
        <taxon>Pentapetalae</taxon>
        <taxon>rosids</taxon>
        <taxon>malvids</taxon>
        <taxon>Brassicales</taxon>
        <taxon>Brassicaceae</taxon>
        <taxon>Camelineae</taxon>
        <taxon>Arabidopsis</taxon>
    </lineage>
</organism>
<gene>
    <name evidence="10" type="primary">NAC052</name>
    <name evidence="10" type="synonym">NAC051</name>
    <name evidence="11" type="synonym">PDD1</name>
    <name evidence="12" type="synonym">SGS1</name>
    <name evidence="13" type="ordered locus">At3g10490</name>
    <name evidence="15" type="ORF">F13M14.23</name>
    <name evidence="14" type="ORF">F18K10.6</name>
</gene>
<sequence length="451" mass="51291">MGRESVAVVTAPPSATAPGTASVATSLAPGFRFHPTDEELVSYYLKRKVLGQPVRFDAIGEVDIYKHEPWDLAVFSRLKTRDQEWYFYSALDKKYGNGARMNRATNRGYWKATGKDREIRRDILLLGMKKTLVFHSGRAPDGLRTNWVMHEYRLVEYETEKNGNLVQDAYVLCRVFHKNNIGPPSGNRYAPFMEEEWADDEGALIPGIDVKLRLEPPPVANGNDQMDQEIQSASKSLININEPPRETAPLDIESDQQNHHENDLKPEEHNNNNNYDENEETLKREQMEEEERPPRPVCVLNKEAPLPLLQYKRRRQSESNNNSSRNTQDHCSSTTTTVDNTTTLISSSAAATNTAISALLEFSLMGISDKKEKPQQPLRPHKEPLPPQTPLASPEEKVNDLQKEIHQMSVERETFKLEMMSAEAMISILQSRIDALRQENEELKKNNANGQ</sequence>
<accession>Q9SQY0</accession>
<accession>F4J3T0</accession>
<comment type="function">
    <text evidence="5 6 7 8 9">Transcriptional repressor that binds to the motif 5'-(C/T)A(C/A)G-3' in the promoter of target genes (PubMed:25578968). Also binds to the 5'-CTTGNNNNNCAAG-3' consensus sequence in chromatin (PubMed:26617990). Can bind to the mitochondrial dysfunction motif (MDM) present in the upstream regions of mitochondrial dysfunction stimulon (MDS) genes involved in mitochondrial retrograde regulation (MRR) (PubMed:24045019). Together with NAC050 and JMJ14, regulates gene expression and flowering time by associating with the histone demethylase JMJ14, probably by the promotion of RNA-mediated gene silencing (PubMed:25578968, PubMed:26617990). Regulates siRNA-dependent post-transcriptional gene silencing (PTGS) through SGS3 expression modulation (PubMed:28207953). Required during pollen development (PubMed:19237690).</text>
</comment>
<comment type="subunit">
    <text evidence="7 8">Interacts with JMJ14 and NAC050.</text>
</comment>
<comment type="subcellular location">
    <subcellularLocation>
        <location evidence="2 8">Nucleus</location>
    </subcellularLocation>
</comment>
<comment type="alternative products">
    <event type="alternative splicing"/>
    <isoform>
        <id>Q9SQY0-1</id>
        <name>1</name>
        <name evidence="10">NAC051</name>
        <sequence type="displayed"/>
    </isoform>
    <isoform>
        <id>Q9SQY0-2</id>
        <name>2</name>
        <name evidence="10">NAC052</name>
        <sequence type="described" ref="VSP_059199 VSP_059200"/>
    </isoform>
</comment>
<comment type="tissue specificity">
    <text evidence="7">Mostly expressed in floral organs, and, at low levels, in other organs.</text>
</comment>
<comment type="induction">
    <text evidence="4">Induced by type III effector proteins (TTEs) secreted by the pathogenic bacteria P.syringae pv. tomato DC3000 during basal defense.</text>
</comment>
<comment type="domain">
    <text evidence="2">The NAC domain includes a DNA binding domain and a dimerization domain.</text>
</comment>
<comment type="disruption phenotype">
    <text evidence="5 7 8">The double mutant nac050 nac052 exhibits early flowering and increased H3K4 methylation on specific genes, thus leading to their derepression (PubMed:25578968). Impaired pollen development (PubMed:19237690). Impaired RNA-mediated gene silencing (PubMed:26617990).</text>
</comment>
<protein>
    <recommendedName>
        <fullName evidence="10">NAC domain containing protein 52</fullName>
        <shortName evidence="10">ANAC052</shortName>
    </recommendedName>
    <alternativeName>
        <fullName evidence="10">NAC domain containing protein 51</fullName>
        <shortName evidence="10">ANAC051</shortName>
    </alternativeName>
    <alternativeName>
        <fullName evidence="11">Protein POLLEN DEVELOPMENT DEFECTIVE 1</fullName>
    </alternativeName>
    <alternativeName>
        <fullName evidence="12">Protein SUPPRESSOR OF GENE SILENCING 1</fullName>
    </alternativeName>
</protein>
<name>NAC52_ARATH</name>
<evidence type="ECO:0000255" key="1"/>
<evidence type="ECO:0000255" key="2">
    <source>
        <dbReference type="PROSITE-ProRule" id="PRU00353"/>
    </source>
</evidence>
<evidence type="ECO:0000256" key="3">
    <source>
        <dbReference type="SAM" id="MobiDB-lite"/>
    </source>
</evidence>
<evidence type="ECO:0000269" key="4">
    <source>
    </source>
</evidence>
<evidence type="ECO:0000269" key="5">
    <source>
    </source>
</evidence>
<evidence type="ECO:0000269" key="6">
    <source>
    </source>
</evidence>
<evidence type="ECO:0000269" key="7">
    <source>
    </source>
</evidence>
<evidence type="ECO:0000269" key="8">
    <source>
    </source>
</evidence>
<evidence type="ECO:0000269" key="9">
    <source>
    </source>
</evidence>
<evidence type="ECO:0000303" key="10">
    <source>
    </source>
</evidence>
<evidence type="ECO:0000303" key="11">
    <source>
    </source>
</evidence>
<evidence type="ECO:0000303" key="12">
    <source>
    </source>
</evidence>
<evidence type="ECO:0000312" key="13">
    <source>
        <dbReference type="Araport" id="AT3G10490"/>
    </source>
</evidence>
<evidence type="ECO:0000312" key="14">
    <source>
        <dbReference type="EMBL" id="AAF76350.1"/>
    </source>
</evidence>
<evidence type="ECO:0000312" key="15">
    <source>
        <dbReference type="EMBL" id="AAG51391.1"/>
    </source>
</evidence>
<keyword id="KW-0025">Alternative splicing</keyword>
<keyword id="KW-0175">Coiled coil</keyword>
<keyword id="KW-0238">DNA-binding</keyword>
<keyword id="KW-0287">Flowering</keyword>
<keyword id="KW-0539">Nucleus</keyword>
<keyword id="KW-0611">Plant defense</keyword>
<keyword id="KW-1185">Reference proteome</keyword>
<keyword id="KW-0678">Repressor</keyword>
<keyword id="KW-0804">Transcription</keyword>
<keyword id="KW-0805">Transcription regulation</keyword>
<dbReference type="EMBL" id="AC011560">
    <property type="protein sequence ID" value="AAG51391.1"/>
    <property type="molecule type" value="Genomic_DNA"/>
</dbReference>
<dbReference type="EMBL" id="AC013428">
    <property type="protein sequence ID" value="AAF76350.1"/>
    <property type="molecule type" value="Genomic_DNA"/>
</dbReference>
<dbReference type="EMBL" id="CP002686">
    <property type="protein sequence ID" value="AEE74915.1"/>
    <property type="molecule type" value="Genomic_DNA"/>
</dbReference>
<dbReference type="EMBL" id="CP002686">
    <property type="protein sequence ID" value="AEE74916.1"/>
    <property type="molecule type" value="Genomic_DNA"/>
</dbReference>
<dbReference type="RefSeq" id="NP_566375.1">
    <molecule id="Q9SQY0-2"/>
    <property type="nucleotide sequence ID" value="NM_111884.2"/>
</dbReference>
<dbReference type="RefSeq" id="NP_850554.1">
    <molecule id="Q9SQY0-1"/>
    <property type="nucleotide sequence ID" value="NM_180223.4"/>
</dbReference>
<dbReference type="SMR" id="Q9SQY0"/>
<dbReference type="FunCoup" id="Q9SQY0">
    <property type="interactions" value="1317"/>
</dbReference>
<dbReference type="STRING" id="3702.Q9SQY0"/>
<dbReference type="PaxDb" id="3702-AT3G10490.2"/>
<dbReference type="ProteomicsDB" id="248925">
    <molecule id="Q9SQY0-1"/>
</dbReference>
<dbReference type="EnsemblPlants" id="AT3G10490.1">
    <molecule id="Q9SQY0-2"/>
    <property type="protein sequence ID" value="AT3G10490.1"/>
    <property type="gene ID" value="AT3G10490"/>
</dbReference>
<dbReference type="EnsemblPlants" id="AT3G10490.2">
    <molecule id="Q9SQY0-1"/>
    <property type="protein sequence ID" value="AT3G10490.2"/>
    <property type="gene ID" value="AT3G10490"/>
</dbReference>
<dbReference type="GeneID" id="820213"/>
<dbReference type="Gramene" id="AT3G10490.1">
    <molecule id="Q9SQY0-2"/>
    <property type="protein sequence ID" value="AT3G10490.1"/>
    <property type="gene ID" value="AT3G10490"/>
</dbReference>
<dbReference type="Gramene" id="AT3G10490.2">
    <molecule id="Q9SQY0-1"/>
    <property type="protein sequence ID" value="AT3G10490.2"/>
    <property type="gene ID" value="AT3G10490"/>
</dbReference>
<dbReference type="KEGG" id="ath:AT3G10490"/>
<dbReference type="Araport" id="AT3G10490"/>
<dbReference type="TAIR" id="AT3G10490">
    <property type="gene designation" value="ANAC052"/>
</dbReference>
<dbReference type="eggNOG" id="ENOG502QWS8">
    <property type="taxonomic scope" value="Eukaryota"/>
</dbReference>
<dbReference type="HOGENOM" id="CLU_035664_13_0_1"/>
<dbReference type="InParanoid" id="Q9SQY0"/>
<dbReference type="OMA" id="TCTEINR"/>
<dbReference type="PhylomeDB" id="Q9SQY0"/>
<dbReference type="CD-CODE" id="4299E36E">
    <property type="entry name" value="Nucleolus"/>
</dbReference>
<dbReference type="PRO" id="PR:Q9SQY0"/>
<dbReference type="Proteomes" id="UP000006548">
    <property type="component" value="Chromosome 3"/>
</dbReference>
<dbReference type="ExpressionAtlas" id="Q9SQY0">
    <property type="expression patterns" value="baseline and differential"/>
</dbReference>
<dbReference type="GO" id="GO:0005730">
    <property type="term" value="C:nucleolus"/>
    <property type="evidence" value="ECO:0007005"/>
    <property type="project" value="TAIR"/>
</dbReference>
<dbReference type="GO" id="GO:0005634">
    <property type="term" value="C:nucleus"/>
    <property type="evidence" value="ECO:0000314"/>
    <property type="project" value="UniProtKB"/>
</dbReference>
<dbReference type="GO" id="GO:0003700">
    <property type="term" value="F:DNA-binding transcription factor activity"/>
    <property type="evidence" value="ECO:0000314"/>
    <property type="project" value="TAIR"/>
</dbReference>
<dbReference type="GO" id="GO:0043565">
    <property type="term" value="F:sequence-specific DNA binding"/>
    <property type="evidence" value="ECO:0000314"/>
    <property type="project" value="UniProtKB"/>
</dbReference>
<dbReference type="GO" id="GO:0000976">
    <property type="term" value="F:transcription cis-regulatory region binding"/>
    <property type="evidence" value="ECO:0000314"/>
    <property type="project" value="UniProtKB"/>
</dbReference>
<dbReference type="GO" id="GO:0006952">
    <property type="term" value="P:defense response"/>
    <property type="evidence" value="ECO:0007669"/>
    <property type="project" value="UniProtKB-KW"/>
</dbReference>
<dbReference type="GO" id="GO:0006351">
    <property type="term" value="P:DNA-templated transcription"/>
    <property type="evidence" value="ECO:0000314"/>
    <property type="project" value="TAIR"/>
</dbReference>
<dbReference type="GO" id="GO:0009908">
    <property type="term" value="P:flower development"/>
    <property type="evidence" value="ECO:0007669"/>
    <property type="project" value="UniProtKB-KW"/>
</dbReference>
<dbReference type="GO" id="GO:0045892">
    <property type="term" value="P:negative regulation of DNA-templated transcription"/>
    <property type="evidence" value="ECO:0000315"/>
    <property type="project" value="UniProtKB"/>
</dbReference>
<dbReference type="GO" id="GO:0045814">
    <property type="term" value="P:negative regulation of gene expression, epigenetic"/>
    <property type="evidence" value="ECO:0000315"/>
    <property type="project" value="UniProtKB"/>
</dbReference>
<dbReference type="GO" id="GO:0000122">
    <property type="term" value="P:negative regulation of transcription by RNA polymerase II"/>
    <property type="evidence" value="ECO:0000314"/>
    <property type="project" value="UniProtKB"/>
</dbReference>
<dbReference type="GO" id="GO:0048573">
    <property type="term" value="P:photoperiodism, flowering"/>
    <property type="evidence" value="ECO:0000315"/>
    <property type="project" value="UniProtKB"/>
</dbReference>
<dbReference type="GO" id="GO:0009555">
    <property type="term" value="P:pollen development"/>
    <property type="evidence" value="ECO:0000315"/>
    <property type="project" value="TAIR"/>
</dbReference>
<dbReference type="GO" id="GO:0016441">
    <property type="term" value="P:post-transcriptional gene silencing"/>
    <property type="evidence" value="ECO:0000315"/>
    <property type="project" value="TAIR"/>
</dbReference>
<dbReference type="GO" id="GO:0060966">
    <property type="term" value="P:regulation of gene silencing by regulatory ncRNA"/>
    <property type="evidence" value="ECO:0000315"/>
    <property type="project" value="UniProtKB"/>
</dbReference>
<dbReference type="GO" id="GO:0002237">
    <property type="term" value="P:response to molecule of bacterial origin"/>
    <property type="evidence" value="ECO:0000270"/>
    <property type="project" value="UniProtKB"/>
</dbReference>
<dbReference type="GO" id="GO:0010267">
    <property type="term" value="P:ta-siRNA processing"/>
    <property type="evidence" value="ECO:0000315"/>
    <property type="project" value="TAIR"/>
</dbReference>
<dbReference type="GO" id="GO:0010228">
    <property type="term" value="P:vegetative to reproductive phase transition of meristem"/>
    <property type="evidence" value="ECO:0000316"/>
    <property type="project" value="TAIR"/>
</dbReference>
<dbReference type="FunFam" id="2.170.150.80:FF:000002">
    <property type="entry name" value="Nac domain-containing protein 86"/>
    <property type="match status" value="1"/>
</dbReference>
<dbReference type="Gene3D" id="2.170.150.80">
    <property type="entry name" value="NAC domain"/>
    <property type="match status" value="1"/>
</dbReference>
<dbReference type="InterPro" id="IPR003441">
    <property type="entry name" value="NAC-dom"/>
</dbReference>
<dbReference type="InterPro" id="IPR036093">
    <property type="entry name" value="NAC_dom_sf"/>
</dbReference>
<dbReference type="PANTHER" id="PTHR31744:SF210">
    <property type="entry name" value="NAC DOMAIN-CONTAINING PROTEIN 86-LIKE"/>
    <property type="match status" value="1"/>
</dbReference>
<dbReference type="PANTHER" id="PTHR31744">
    <property type="entry name" value="PROTEIN CUP-SHAPED COTYLEDON 2-RELATED"/>
    <property type="match status" value="1"/>
</dbReference>
<dbReference type="Pfam" id="PF02365">
    <property type="entry name" value="NAM"/>
    <property type="match status" value="1"/>
</dbReference>
<dbReference type="SUPFAM" id="SSF101941">
    <property type="entry name" value="NAC domain"/>
    <property type="match status" value="1"/>
</dbReference>
<dbReference type="PROSITE" id="PS51005">
    <property type="entry name" value="NAC"/>
    <property type="match status" value="1"/>
</dbReference>
<feature type="chain" id="PRO_0000442195" description="NAC domain containing protein 52">
    <location>
        <begin position="1"/>
        <end position="451"/>
    </location>
</feature>
<feature type="domain" description="NAC" evidence="2">
    <location>
        <begin position="27"/>
        <end position="178"/>
    </location>
</feature>
<feature type="DNA-binding region" evidence="2">
    <location>
        <begin position="126"/>
        <end position="184"/>
    </location>
</feature>
<feature type="region of interest" description="Disordered" evidence="3">
    <location>
        <begin position="1"/>
        <end position="21"/>
    </location>
</feature>
<feature type="region of interest" description="Disordered" evidence="3">
    <location>
        <begin position="255"/>
        <end position="337"/>
    </location>
</feature>
<feature type="region of interest" description="Disordered" evidence="3">
    <location>
        <begin position="370"/>
        <end position="400"/>
    </location>
</feature>
<feature type="coiled-coil region" evidence="1">
    <location>
        <begin position="272"/>
        <end position="292"/>
    </location>
</feature>
<feature type="coiled-coil region" evidence="1">
    <location>
        <begin position="398"/>
        <end position="446"/>
    </location>
</feature>
<feature type="compositionally biased region" description="Basic and acidic residues" evidence="3">
    <location>
        <begin position="256"/>
        <end position="270"/>
    </location>
</feature>
<feature type="compositionally biased region" description="Low complexity" evidence="3">
    <location>
        <begin position="318"/>
        <end position="337"/>
    </location>
</feature>
<feature type="compositionally biased region" description="Basic and acidic residues" evidence="3">
    <location>
        <begin position="370"/>
        <end position="384"/>
    </location>
</feature>
<feature type="splice variant" id="VSP_059199" description="In isoform 2.">
    <original>EIQSASKSLI</original>
    <variation>IIYASSGVHL</variation>
    <location>
        <begin position="229"/>
        <end position="238"/>
    </location>
</feature>
<feature type="splice variant" id="VSP_059200" description="In isoform 2.">
    <location>
        <begin position="239"/>
        <end position="451"/>
    </location>
</feature>
<feature type="mutagenesis site" description="In sgs1; increased transgene promoter DNA methylation, reduced histone H3 methylation levels (e.g. H3K4me3 and H3K36me3), reduced polymerase II (PolII) occupancy and reduced transgene mRNA accumulation. Impaired siRNA-dependent post-transcriptional gene silencing (PTGS) through SGS3 down-regulation. Downward curling of the leaf margins and early flowering." evidence="9">
    <original>R</original>
    <variation>Q</variation>
    <location>
        <position position="32"/>
    </location>
</feature>
<proteinExistence type="evidence at protein level"/>